<evidence type="ECO:0000255" key="1">
    <source>
        <dbReference type="HAMAP-Rule" id="MF_00503"/>
    </source>
</evidence>
<evidence type="ECO:0000305" key="2"/>
<organism>
    <name type="scientific">Salmonella paratyphi A (strain AKU_12601)</name>
    <dbReference type="NCBI Taxonomy" id="554290"/>
    <lineage>
        <taxon>Bacteria</taxon>
        <taxon>Pseudomonadati</taxon>
        <taxon>Pseudomonadota</taxon>
        <taxon>Gammaproteobacteria</taxon>
        <taxon>Enterobacterales</taxon>
        <taxon>Enterobacteriaceae</taxon>
        <taxon>Salmonella</taxon>
    </lineage>
</organism>
<feature type="chain" id="PRO_1000126969" description="Large ribosomal subunit protein bL9">
    <location>
        <begin position="1"/>
        <end position="149"/>
    </location>
</feature>
<dbReference type="EMBL" id="FM200053">
    <property type="protein sequence ID" value="CAR62197.1"/>
    <property type="molecule type" value="Genomic_DNA"/>
</dbReference>
<dbReference type="RefSeq" id="WP_001196065.1">
    <property type="nucleotide sequence ID" value="NC_011147.1"/>
</dbReference>
<dbReference type="SMR" id="B5BKL2"/>
<dbReference type="GeneID" id="66758618"/>
<dbReference type="KEGG" id="sek:SSPA3911"/>
<dbReference type="HOGENOM" id="CLU_078938_4_1_6"/>
<dbReference type="Proteomes" id="UP000001869">
    <property type="component" value="Chromosome"/>
</dbReference>
<dbReference type="GO" id="GO:1990904">
    <property type="term" value="C:ribonucleoprotein complex"/>
    <property type="evidence" value="ECO:0007669"/>
    <property type="project" value="UniProtKB-KW"/>
</dbReference>
<dbReference type="GO" id="GO:0005840">
    <property type="term" value="C:ribosome"/>
    <property type="evidence" value="ECO:0007669"/>
    <property type="project" value="UniProtKB-KW"/>
</dbReference>
<dbReference type="GO" id="GO:0019843">
    <property type="term" value="F:rRNA binding"/>
    <property type="evidence" value="ECO:0007669"/>
    <property type="project" value="UniProtKB-UniRule"/>
</dbReference>
<dbReference type="GO" id="GO:0003735">
    <property type="term" value="F:structural constituent of ribosome"/>
    <property type="evidence" value="ECO:0007669"/>
    <property type="project" value="InterPro"/>
</dbReference>
<dbReference type="GO" id="GO:0006412">
    <property type="term" value="P:translation"/>
    <property type="evidence" value="ECO:0007669"/>
    <property type="project" value="UniProtKB-UniRule"/>
</dbReference>
<dbReference type="FunFam" id="3.10.430.100:FF:000001">
    <property type="entry name" value="50S ribosomal protein L9"/>
    <property type="match status" value="1"/>
</dbReference>
<dbReference type="FunFam" id="3.40.5.10:FF:000001">
    <property type="entry name" value="50S ribosomal protein L9"/>
    <property type="match status" value="1"/>
</dbReference>
<dbReference type="Gene3D" id="3.10.430.100">
    <property type="entry name" value="Ribosomal protein L9, C-terminal domain"/>
    <property type="match status" value="1"/>
</dbReference>
<dbReference type="Gene3D" id="3.40.5.10">
    <property type="entry name" value="Ribosomal protein L9, N-terminal domain"/>
    <property type="match status" value="1"/>
</dbReference>
<dbReference type="HAMAP" id="MF_00503">
    <property type="entry name" value="Ribosomal_bL9"/>
    <property type="match status" value="1"/>
</dbReference>
<dbReference type="InterPro" id="IPR000244">
    <property type="entry name" value="Ribosomal_bL9"/>
</dbReference>
<dbReference type="InterPro" id="IPR009027">
    <property type="entry name" value="Ribosomal_bL9/RNase_H1_N"/>
</dbReference>
<dbReference type="InterPro" id="IPR020594">
    <property type="entry name" value="Ribosomal_bL9_bac/chp"/>
</dbReference>
<dbReference type="InterPro" id="IPR020069">
    <property type="entry name" value="Ribosomal_bL9_C"/>
</dbReference>
<dbReference type="InterPro" id="IPR036791">
    <property type="entry name" value="Ribosomal_bL9_C_sf"/>
</dbReference>
<dbReference type="InterPro" id="IPR020070">
    <property type="entry name" value="Ribosomal_bL9_N"/>
</dbReference>
<dbReference type="InterPro" id="IPR036935">
    <property type="entry name" value="Ribosomal_bL9_N_sf"/>
</dbReference>
<dbReference type="NCBIfam" id="TIGR00158">
    <property type="entry name" value="L9"/>
    <property type="match status" value="1"/>
</dbReference>
<dbReference type="PANTHER" id="PTHR21368">
    <property type="entry name" value="50S RIBOSOMAL PROTEIN L9"/>
    <property type="match status" value="1"/>
</dbReference>
<dbReference type="Pfam" id="PF03948">
    <property type="entry name" value="Ribosomal_L9_C"/>
    <property type="match status" value="1"/>
</dbReference>
<dbReference type="Pfam" id="PF01281">
    <property type="entry name" value="Ribosomal_L9_N"/>
    <property type="match status" value="1"/>
</dbReference>
<dbReference type="SUPFAM" id="SSF55658">
    <property type="entry name" value="L9 N-domain-like"/>
    <property type="match status" value="1"/>
</dbReference>
<dbReference type="SUPFAM" id="SSF55653">
    <property type="entry name" value="Ribosomal protein L9 C-domain"/>
    <property type="match status" value="1"/>
</dbReference>
<dbReference type="PROSITE" id="PS00651">
    <property type="entry name" value="RIBOSOMAL_L9"/>
    <property type="match status" value="1"/>
</dbReference>
<sequence length="149" mass="15784">MQVILLDKVANLGSLGDQVNVKAGYARNFLVPQGKAVPATKKNVEYFEARRAELEAKLADVLAAANARAEKINALETVTIASKAGDEGKLFGSIGTRDIADAVTAAGVDVAKSEVRLPNGVLRTTGEHEVNFQVHSEVFAKVIINVVAE</sequence>
<proteinExistence type="inferred from homology"/>
<protein>
    <recommendedName>
        <fullName evidence="1">Large ribosomal subunit protein bL9</fullName>
    </recommendedName>
    <alternativeName>
        <fullName evidence="2">50S ribosomal protein L9</fullName>
    </alternativeName>
</protein>
<gene>
    <name evidence="1" type="primary">rplI</name>
    <name type="ordered locus">SSPA3911</name>
</gene>
<accession>B5BKL2</accession>
<reference key="1">
    <citation type="journal article" date="2009" name="BMC Genomics">
        <title>Pseudogene accumulation in the evolutionary histories of Salmonella enterica serovars Paratyphi A and Typhi.</title>
        <authorList>
            <person name="Holt K.E."/>
            <person name="Thomson N.R."/>
            <person name="Wain J."/>
            <person name="Langridge G.C."/>
            <person name="Hasan R."/>
            <person name="Bhutta Z.A."/>
            <person name="Quail M.A."/>
            <person name="Norbertczak H."/>
            <person name="Walker D."/>
            <person name="Simmonds M."/>
            <person name="White B."/>
            <person name="Bason N."/>
            <person name="Mungall K."/>
            <person name="Dougan G."/>
            <person name="Parkhill J."/>
        </authorList>
    </citation>
    <scope>NUCLEOTIDE SEQUENCE [LARGE SCALE GENOMIC DNA]</scope>
    <source>
        <strain>AKU_12601</strain>
    </source>
</reference>
<keyword id="KW-0687">Ribonucleoprotein</keyword>
<keyword id="KW-0689">Ribosomal protein</keyword>
<keyword id="KW-0694">RNA-binding</keyword>
<keyword id="KW-0699">rRNA-binding</keyword>
<comment type="function">
    <text evidence="1">Binds to the 23S rRNA.</text>
</comment>
<comment type="similarity">
    <text evidence="1">Belongs to the bacterial ribosomal protein bL9 family.</text>
</comment>
<name>RL9_SALPK</name>